<name>FSHB_MERUN</name>
<proteinExistence type="evidence at transcript level"/>
<accession>Q6U830</accession>
<reference key="1">
    <citation type="journal article" date="2004" name="Gen. Comp. Endocrinol.">
        <title>Sequence analysis of cDNA encoding follicle-stimulating hormone and luteinizing hormone beta-subunits in the Mongolian gerbil (Meriones unguiculatus).</title>
        <authorList>
            <person name="Koura M."/>
            <person name="Handa H."/>
            <person name="Noguchi Y."/>
            <person name="Takano K."/>
            <person name="Yamamoto Y."/>
            <person name="Matsuda J."/>
            <person name="Suzuki O."/>
        </authorList>
    </citation>
    <scope>NUCLEOTIDE SEQUENCE [MRNA]</scope>
    <source>
        <tissue>Pituitary</tissue>
    </source>
</reference>
<sequence length="129" mass="14740">MKSVQLCLLLWCWRAICCRSCELTNITIAVEKEECRFCVSINTTWCAGYCYTRDLVYKDPARPNTQKVCTFKELVYETVRLPGCAHHSDSFYTYPVATECHCSKCDSHSTDCTVRGLGPSYCSFGEMKE</sequence>
<evidence type="ECO:0000250" key="1">
    <source>
        <dbReference type="UniProtKB" id="P01225"/>
    </source>
</evidence>
<evidence type="ECO:0000255" key="2"/>
<evidence type="ECO:0000305" key="3"/>
<keyword id="KW-1015">Disulfide bond</keyword>
<keyword id="KW-0325">Glycoprotein</keyword>
<keyword id="KW-0372">Hormone</keyword>
<keyword id="KW-0964">Secreted</keyword>
<keyword id="KW-0732">Signal</keyword>
<organism>
    <name type="scientific">Meriones unguiculatus</name>
    <name type="common">Mongolian jird</name>
    <name type="synonym">Gerbillus unguiculatus</name>
    <dbReference type="NCBI Taxonomy" id="10047"/>
    <lineage>
        <taxon>Eukaryota</taxon>
        <taxon>Metazoa</taxon>
        <taxon>Chordata</taxon>
        <taxon>Craniata</taxon>
        <taxon>Vertebrata</taxon>
        <taxon>Euteleostomi</taxon>
        <taxon>Mammalia</taxon>
        <taxon>Eutheria</taxon>
        <taxon>Euarchontoglires</taxon>
        <taxon>Glires</taxon>
        <taxon>Rodentia</taxon>
        <taxon>Myomorpha</taxon>
        <taxon>Muroidea</taxon>
        <taxon>Muridae</taxon>
        <taxon>Gerbillinae</taxon>
        <taxon>Meriones</taxon>
    </lineage>
</organism>
<protein>
    <recommendedName>
        <fullName>Follitropin subunit beta</fullName>
    </recommendedName>
    <alternativeName>
        <fullName>Follicle-stimulating hormone beta subunit</fullName>
        <shortName>FSH-B</shortName>
        <shortName>FSH-beta</shortName>
    </alternativeName>
    <alternativeName>
        <fullName>Follitropin beta chain</fullName>
    </alternativeName>
</protein>
<gene>
    <name type="primary">FSHB</name>
</gene>
<dbReference type="EMBL" id="AY376457">
    <property type="protein sequence ID" value="AAQ83633.1"/>
    <property type="molecule type" value="mRNA"/>
</dbReference>
<dbReference type="SMR" id="Q6U830"/>
<dbReference type="GlyCosmos" id="Q6U830">
    <property type="glycosylation" value="2 sites, No reported glycans"/>
</dbReference>
<dbReference type="GO" id="GO:0005737">
    <property type="term" value="C:cytoplasm"/>
    <property type="evidence" value="ECO:0007669"/>
    <property type="project" value="TreeGrafter"/>
</dbReference>
<dbReference type="GO" id="GO:0005615">
    <property type="term" value="C:extracellular space"/>
    <property type="evidence" value="ECO:0000250"/>
    <property type="project" value="UniProtKB"/>
</dbReference>
<dbReference type="GO" id="GO:0016914">
    <property type="term" value="C:follicle-stimulating hormone complex"/>
    <property type="evidence" value="ECO:0000250"/>
    <property type="project" value="UniProtKB"/>
</dbReference>
<dbReference type="GO" id="GO:0016913">
    <property type="term" value="F:follicle-stimulating hormone activity"/>
    <property type="evidence" value="ECO:0000250"/>
    <property type="project" value="UniProtKB"/>
</dbReference>
<dbReference type="GO" id="GO:0042699">
    <property type="term" value="P:follicle-stimulating hormone signaling pathway"/>
    <property type="evidence" value="ECO:0007669"/>
    <property type="project" value="TreeGrafter"/>
</dbReference>
<dbReference type="GO" id="GO:0007186">
    <property type="term" value="P:G protein-coupled receptor signaling pathway"/>
    <property type="evidence" value="ECO:0000250"/>
    <property type="project" value="UniProtKB"/>
</dbReference>
<dbReference type="GO" id="GO:0010469">
    <property type="term" value="P:regulation of signaling receptor activity"/>
    <property type="evidence" value="ECO:0000250"/>
    <property type="project" value="UniProtKB"/>
</dbReference>
<dbReference type="CDD" id="cd00069">
    <property type="entry name" value="GHB_like"/>
    <property type="match status" value="1"/>
</dbReference>
<dbReference type="FunFam" id="2.10.90.10:FF:000007">
    <property type="entry name" value="Luteinizing hormone beta subunit"/>
    <property type="match status" value="1"/>
</dbReference>
<dbReference type="Gene3D" id="2.10.90.10">
    <property type="entry name" value="Cystine-knot cytokines"/>
    <property type="match status" value="1"/>
</dbReference>
<dbReference type="InterPro" id="IPR029034">
    <property type="entry name" value="Cystine-knot_cytokine"/>
</dbReference>
<dbReference type="InterPro" id="IPR006208">
    <property type="entry name" value="Glyco_hormone_CN"/>
</dbReference>
<dbReference type="InterPro" id="IPR001545">
    <property type="entry name" value="Gonadotropin_bsu"/>
</dbReference>
<dbReference type="InterPro" id="IPR018245">
    <property type="entry name" value="Gonadotropin_bsu_CS"/>
</dbReference>
<dbReference type="PANTHER" id="PTHR11515:SF17">
    <property type="entry name" value="FOLLITROPIN SUBUNIT BETA"/>
    <property type="match status" value="1"/>
</dbReference>
<dbReference type="PANTHER" id="PTHR11515">
    <property type="entry name" value="GLYCOPROTEIN HORMONE BETA CHAIN"/>
    <property type="match status" value="1"/>
</dbReference>
<dbReference type="Pfam" id="PF00007">
    <property type="entry name" value="Cys_knot"/>
    <property type="match status" value="1"/>
</dbReference>
<dbReference type="SMART" id="SM00068">
    <property type="entry name" value="GHB"/>
    <property type="match status" value="1"/>
</dbReference>
<dbReference type="SUPFAM" id="SSF57501">
    <property type="entry name" value="Cystine-knot cytokines"/>
    <property type="match status" value="1"/>
</dbReference>
<dbReference type="PROSITE" id="PS00261">
    <property type="entry name" value="GLYCO_HORMONE_BETA_1"/>
    <property type="match status" value="1"/>
</dbReference>
<dbReference type="PROSITE" id="PS00689">
    <property type="entry name" value="GLYCO_HORMONE_BETA_2"/>
    <property type="match status" value="1"/>
</dbReference>
<comment type="function">
    <text evidence="1">Together with the alpha chain CGA constitutes follitropin, the follicle-stimulating hormone, and provides its biological specificity to the hormone heterodimer. Binds FSHR, a G protein-coupled receptor, on target cells to activate downstream signaling pathways. Follitropin is involved in follicle development and spermatogenesis in reproductive organs.</text>
</comment>
<comment type="subunit">
    <text evidence="1">Heterodimer. The active follitropin is a heterodimer composed of an alpha chain/CGA shared with other hormones and a unique beta chain/FSHB shown here.</text>
</comment>
<comment type="subcellular location">
    <subcellularLocation>
        <location evidence="1">Secreted</location>
    </subcellularLocation>
    <text evidence="1">Efficient secretion requires dimerization with CGA.</text>
</comment>
<comment type="similarity">
    <text evidence="3">Belongs to the glycoprotein hormones subunit beta family.</text>
</comment>
<feature type="signal peptide" evidence="2">
    <location>
        <begin position="1"/>
        <end position="18"/>
    </location>
</feature>
<feature type="chain" id="PRO_0000042882" description="Follitropin subunit beta">
    <location>
        <begin position="19"/>
        <end position="129"/>
    </location>
</feature>
<feature type="glycosylation site" description="N-linked (GlcNAc...) asparagine" evidence="1">
    <location>
        <position position="25"/>
    </location>
</feature>
<feature type="glycosylation site" description="N-linked (GlcNAc...) asparagine" evidence="1">
    <location>
        <position position="42"/>
    </location>
</feature>
<feature type="disulfide bond" evidence="1">
    <location>
        <begin position="21"/>
        <end position="69"/>
    </location>
</feature>
<feature type="disulfide bond" evidence="1">
    <location>
        <begin position="35"/>
        <end position="84"/>
    </location>
</feature>
<feature type="disulfide bond" evidence="1">
    <location>
        <begin position="38"/>
        <end position="122"/>
    </location>
</feature>
<feature type="disulfide bond" evidence="1">
    <location>
        <begin position="46"/>
        <end position="100"/>
    </location>
</feature>
<feature type="disulfide bond" evidence="1">
    <location>
        <begin position="50"/>
        <end position="102"/>
    </location>
</feature>
<feature type="disulfide bond" evidence="1">
    <location>
        <begin position="105"/>
        <end position="112"/>
    </location>
</feature>